<dbReference type="EC" id="2.3.1.74"/>
<dbReference type="EMBL" id="L24516">
    <property type="protein sequence ID" value="AAA73938.1"/>
    <property type="molecule type" value="Genomic_DNA"/>
</dbReference>
<dbReference type="SMR" id="P51086"/>
<dbReference type="UniPathway" id="UPA00154"/>
<dbReference type="GO" id="GO:0016210">
    <property type="term" value="F:naringenin-chalcone synthase activity"/>
    <property type="evidence" value="ECO:0007669"/>
    <property type="project" value="UniProtKB-EC"/>
</dbReference>
<dbReference type="GO" id="GO:0009813">
    <property type="term" value="P:flavonoid biosynthetic process"/>
    <property type="evidence" value="ECO:0007669"/>
    <property type="project" value="UniProtKB-UniPathway"/>
</dbReference>
<dbReference type="GO" id="GO:0030639">
    <property type="term" value="P:polyketide biosynthetic process"/>
    <property type="evidence" value="ECO:0007669"/>
    <property type="project" value="TreeGrafter"/>
</dbReference>
<dbReference type="CDD" id="cd00831">
    <property type="entry name" value="CHS_like"/>
    <property type="match status" value="1"/>
</dbReference>
<dbReference type="FunFam" id="3.40.47.10:FF:000025">
    <property type="entry name" value="Chalcone synthase 2"/>
    <property type="match status" value="1"/>
</dbReference>
<dbReference type="Gene3D" id="3.40.47.10">
    <property type="match status" value="2"/>
</dbReference>
<dbReference type="InterPro" id="IPR012328">
    <property type="entry name" value="Chalcone/stilbene_synt_C"/>
</dbReference>
<dbReference type="InterPro" id="IPR001099">
    <property type="entry name" value="Chalcone/stilbene_synt_N"/>
</dbReference>
<dbReference type="InterPro" id="IPR018088">
    <property type="entry name" value="Chalcone/stilbene_synthase_AS"/>
</dbReference>
<dbReference type="InterPro" id="IPR011141">
    <property type="entry name" value="Polyketide_synthase_type-III"/>
</dbReference>
<dbReference type="InterPro" id="IPR016039">
    <property type="entry name" value="Thiolase-like"/>
</dbReference>
<dbReference type="PANTHER" id="PTHR11877:SF62">
    <property type="entry name" value="CHALCONE SYNTHASE 7"/>
    <property type="match status" value="1"/>
</dbReference>
<dbReference type="PANTHER" id="PTHR11877">
    <property type="entry name" value="HYDROXYMETHYLGLUTARYL-COA SYNTHASE"/>
    <property type="match status" value="1"/>
</dbReference>
<dbReference type="Pfam" id="PF02797">
    <property type="entry name" value="Chal_sti_synt_C"/>
    <property type="match status" value="1"/>
</dbReference>
<dbReference type="Pfam" id="PF00195">
    <property type="entry name" value="Chal_sti_synt_N"/>
    <property type="match status" value="1"/>
</dbReference>
<dbReference type="SUPFAM" id="SSF53901">
    <property type="entry name" value="Thiolase-like"/>
    <property type="match status" value="2"/>
</dbReference>
<dbReference type="PROSITE" id="PS00441">
    <property type="entry name" value="CHALCONE_SYNTH"/>
    <property type="match status" value="1"/>
</dbReference>
<sequence>MVSVSEIRKAQRAEGPATILAIGTANPANKVEQATYPDFYFKITNSEHKVELKEKFQRMCDKSMIKSRYMYLTEEILKENPSVCEYMAPSLDARQDMVVVEVPRLGKEAAVKAIKEWGQPKSKITHLIFCTTSGVDMPGADYQLTKLLGLRPYVKRYMMYQQGCFAGGTVLRLAKDLAENNKGARVLVVCSEVTAVTFRGPSDTHLDSLVGQALFGDGAAALIVGSDPVPEIEKPIFEMVWTAQTIAPDSEGAIDGHLREAGLTFHLLKDVPGIVSKNIDKALVEAFQPLGISDYNSIFWIAHPGGPAILD</sequence>
<proteinExistence type="evidence at transcript level"/>
<organism>
    <name type="scientific">Trifolium subterraneum</name>
    <name type="common">Subterranean clover</name>
    <dbReference type="NCBI Taxonomy" id="3900"/>
    <lineage>
        <taxon>Eukaryota</taxon>
        <taxon>Viridiplantae</taxon>
        <taxon>Streptophyta</taxon>
        <taxon>Embryophyta</taxon>
        <taxon>Tracheophyta</taxon>
        <taxon>Spermatophyta</taxon>
        <taxon>Magnoliopsida</taxon>
        <taxon>eudicotyledons</taxon>
        <taxon>Gunneridae</taxon>
        <taxon>Pentapetalae</taxon>
        <taxon>rosids</taxon>
        <taxon>fabids</taxon>
        <taxon>Fabales</taxon>
        <taxon>Fabaceae</taxon>
        <taxon>Papilionoideae</taxon>
        <taxon>50 kb inversion clade</taxon>
        <taxon>NPAAA clade</taxon>
        <taxon>Hologalegina</taxon>
        <taxon>IRL clade</taxon>
        <taxon>Trifolieae</taxon>
        <taxon>Trifolium</taxon>
    </lineage>
</organism>
<protein>
    <recommendedName>
        <fullName>Chalcone synthase 4</fullName>
        <ecNumber>2.3.1.74</ecNumber>
    </recommendedName>
    <alternativeName>
        <fullName>Naringenin-chalcone synthase 4</fullName>
    </alternativeName>
</protein>
<accession>P51086</accession>
<comment type="function">
    <text>The primary product of this enzyme is 4,2',4',6'-tetrahydroxychalcone (also termed naringenin-chalcone or chalcone) which can under specific conditions spontaneously isomerize into naringenin.</text>
</comment>
<comment type="catalytic activity">
    <reaction evidence="1">
        <text>(E)-4-coumaroyl-CoA + 3 malonyl-CoA + 3 H(+) = 2',4,4',6'-tetrahydroxychalcone + 3 CO2 + 4 CoA</text>
        <dbReference type="Rhea" id="RHEA:11128"/>
        <dbReference type="ChEBI" id="CHEBI:15378"/>
        <dbReference type="ChEBI" id="CHEBI:15413"/>
        <dbReference type="ChEBI" id="CHEBI:16526"/>
        <dbReference type="ChEBI" id="CHEBI:57287"/>
        <dbReference type="ChEBI" id="CHEBI:57384"/>
        <dbReference type="ChEBI" id="CHEBI:85008"/>
        <dbReference type="EC" id="2.3.1.74"/>
    </reaction>
</comment>
<comment type="pathway">
    <text>Secondary metabolite biosynthesis; flavonoid biosynthesis.</text>
</comment>
<comment type="developmental stage">
    <text>Expressed during development.</text>
</comment>
<comment type="similarity">
    <text evidence="2">Belongs to the thiolase-like superfamily. Chalcone/stilbene synthases family.</text>
</comment>
<evidence type="ECO:0000255" key="1">
    <source>
        <dbReference type="PROSITE-ProRule" id="PRU10023"/>
    </source>
</evidence>
<evidence type="ECO:0000305" key="2"/>
<keyword id="KW-0012">Acyltransferase</keyword>
<keyword id="KW-0284">Flavonoid biosynthesis</keyword>
<keyword id="KW-0808">Transferase</keyword>
<name>CHS4_TRISU</name>
<gene>
    <name type="primary">CHS4</name>
</gene>
<reference key="1">
    <citation type="journal article" date="1995" name="Plant Physiol.">
        <title>Nucleotide sequence of additional members of the gene family encoding chalcone synthase in Trifolium subterraneum.</title>
        <authorList>
            <person name="Howles P.A."/>
            <person name="Arioli T."/>
            <person name="Weinman J.J."/>
        </authorList>
    </citation>
    <scope>NUCLEOTIDE SEQUENCE [GENOMIC DNA]</scope>
    <source>
        <strain>cv. Karridale</strain>
        <tissue>Leaf</tissue>
        <tissue>Stem</tissue>
    </source>
</reference>
<feature type="chain" id="PRO_0000216071" description="Chalcone synthase 4">
    <location>
        <begin position="1"/>
        <end position="311" status="greater than"/>
    </location>
</feature>
<feature type="active site" evidence="1">
    <location>
        <position position="164"/>
    </location>
</feature>
<feature type="non-terminal residue">
    <location>
        <position position="311"/>
    </location>
</feature>